<dbReference type="EMBL" id="AE016877">
    <property type="protein sequence ID" value="AAP11482.1"/>
    <property type="molecule type" value="Genomic_DNA"/>
</dbReference>
<dbReference type="RefSeq" id="NP_834281.1">
    <property type="nucleotide sequence ID" value="NC_004722.1"/>
</dbReference>
<dbReference type="RefSeq" id="WP_000973215.1">
    <property type="nucleotide sequence ID" value="NZ_CP138336.1"/>
</dbReference>
<dbReference type="SMR" id="Q812P6"/>
<dbReference type="STRING" id="226900.BC_4575"/>
<dbReference type="GeneID" id="72451236"/>
<dbReference type="KEGG" id="bce:BC4575"/>
<dbReference type="PATRIC" id="fig|226900.8.peg.4735"/>
<dbReference type="HOGENOM" id="CLU_054919_3_2_9"/>
<dbReference type="Proteomes" id="UP000001417">
    <property type="component" value="Chromosome"/>
</dbReference>
<dbReference type="GO" id="GO:0005829">
    <property type="term" value="C:cytosol"/>
    <property type="evidence" value="ECO:0000318"/>
    <property type="project" value="GO_Central"/>
</dbReference>
<dbReference type="GO" id="GO:0043022">
    <property type="term" value="F:ribosome binding"/>
    <property type="evidence" value="ECO:0000318"/>
    <property type="project" value="GO_Central"/>
</dbReference>
<dbReference type="GO" id="GO:0003743">
    <property type="term" value="F:translation initiation factor activity"/>
    <property type="evidence" value="ECO:0000318"/>
    <property type="project" value="GO_Central"/>
</dbReference>
<dbReference type="GO" id="GO:0032790">
    <property type="term" value="P:ribosome disassembly"/>
    <property type="evidence" value="ECO:0000318"/>
    <property type="project" value="GO_Central"/>
</dbReference>
<dbReference type="FunFam" id="3.10.20.80:FF:000001">
    <property type="entry name" value="Translation initiation factor IF-3"/>
    <property type="match status" value="1"/>
</dbReference>
<dbReference type="FunFam" id="3.30.110.10:FF:000001">
    <property type="entry name" value="Translation initiation factor IF-3"/>
    <property type="match status" value="1"/>
</dbReference>
<dbReference type="Gene3D" id="3.30.110.10">
    <property type="entry name" value="Translation initiation factor 3 (IF-3), C-terminal domain"/>
    <property type="match status" value="1"/>
</dbReference>
<dbReference type="Gene3D" id="3.10.20.80">
    <property type="entry name" value="Translation initiation factor 3 (IF-3), N-terminal domain"/>
    <property type="match status" value="1"/>
</dbReference>
<dbReference type="HAMAP" id="MF_00080">
    <property type="entry name" value="IF_3"/>
    <property type="match status" value="1"/>
</dbReference>
<dbReference type="InterPro" id="IPR036788">
    <property type="entry name" value="T_IF-3_C_sf"/>
</dbReference>
<dbReference type="InterPro" id="IPR036787">
    <property type="entry name" value="T_IF-3_N_sf"/>
</dbReference>
<dbReference type="InterPro" id="IPR019813">
    <property type="entry name" value="Translation_initiation_fac3_CS"/>
</dbReference>
<dbReference type="InterPro" id="IPR001288">
    <property type="entry name" value="Translation_initiation_fac_3"/>
</dbReference>
<dbReference type="InterPro" id="IPR019815">
    <property type="entry name" value="Translation_initiation_fac_3_C"/>
</dbReference>
<dbReference type="InterPro" id="IPR019814">
    <property type="entry name" value="Translation_initiation_fac_3_N"/>
</dbReference>
<dbReference type="NCBIfam" id="TIGR00168">
    <property type="entry name" value="infC"/>
    <property type="match status" value="1"/>
</dbReference>
<dbReference type="PANTHER" id="PTHR10938">
    <property type="entry name" value="TRANSLATION INITIATION FACTOR IF-3"/>
    <property type="match status" value="1"/>
</dbReference>
<dbReference type="PANTHER" id="PTHR10938:SF0">
    <property type="entry name" value="TRANSLATION INITIATION FACTOR IF-3, MITOCHONDRIAL"/>
    <property type="match status" value="1"/>
</dbReference>
<dbReference type="Pfam" id="PF00707">
    <property type="entry name" value="IF3_C"/>
    <property type="match status" value="1"/>
</dbReference>
<dbReference type="Pfam" id="PF05198">
    <property type="entry name" value="IF3_N"/>
    <property type="match status" value="1"/>
</dbReference>
<dbReference type="SUPFAM" id="SSF55200">
    <property type="entry name" value="Translation initiation factor IF3, C-terminal domain"/>
    <property type="match status" value="1"/>
</dbReference>
<dbReference type="SUPFAM" id="SSF54364">
    <property type="entry name" value="Translation initiation factor IF3, N-terminal domain"/>
    <property type="match status" value="1"/>
</dbReference>
<dbReference type="PROSITE" id="PS00938">
    <property type="entry name" value="IF3"/>
    <property type="match status" value="1"/>
</dbReference>
<protein>
    <recommendedName>
        <fullName evidence="1">Translation initiation factor IF-3</fullName>
    </recommendedName>
</protein>
<accession>Q812P6</accession>
<proteinExistence type="inferred from homology"/>
<keyword id="KW-0963">Cytoplasm</keyword>
<keyword id="KW-0396">Initiation factor</keyword>
<keyword id="KW-0648">Protein biosynthesis</keyword>
<keyword id="KW-1185">Reference proteome</keyword>
<organism>
    <name type="scientific">Bacillus cereus (strain ATCC 14579 / DSM 31 / CCUG 7414 / JCM 2152 / NBRC 15305 / NCIMB 9373 / NCTC 2599 / NRRL B-3711)</name>
    <dbReference type="NCBI Taxonomy" id="226900"/>
    <lineage>
        <taxon>Bacteria</taxon>
        <taxon>Bacillati</taxon>
        <taxon>Bacillota</taxon>
        <taxon>Bacilli</taxon>
        <taxon>Bacillales</taxon>
        <taxon>Bacillaceae</taxon>
        <taxon>Bacillus</taxon>
        <taxon>Bacillus cereus group</taxon>
    </lineage>
</organism>
<sequence length="167" mass="19066">MMINEQIRAREVRLVGANGDQLGIKSRNDALDLAANLNLDLVLVAPNAKPPVCRIMDYGKFRFEQQKKEKEQRKNQKVISMKEVRLSPTIDEHDFNTKLRNAIKFLEKGDKVKASIRFKGRAITHKEIGQRVLDRFSEACAEVSTVESKPKMEGRSMFLVLAPKNDK</sequence>
<reference key="1">
    <citation type="journal article" date="2003" name="Nature">
        <title>Genome sequence of Bacillus cereus and comparative analysis with Bacillus anthracis.</title>
        <authorList>
            <person name="Ivanova N."/>
            <person name="Sorokin A."/>
            <person name="Anderson I."/>
            <person name="Galleron N."/>
            <person name="Candelon B."/>
            <person name="Kapatral V."/>
            <person name="Bhattacharyya A."/>
            <person name="Reznik G."/>
            <person name="Mikhailova N."/>
            <person name="Lapidus A."/>
            <person name="Chu L."/>
            <person name="Mazur M."/>
            <person name="Goltsman E."/>
            <person name="Larsen N."/>
            <person name="D'Souza M."/>
            <person name="Walunas T."/>
            <person name="Grechkin Y."/>
            <person name="Pusch G."/>
            <person name="Haselkorn R."/>
            <person name="Fonstein M."/>
            <person name="Ehrlich S.D."/>
            <person name="Overbeek R."/>
            <person name="Kyrpides N.C."/>
        </authorList>
    </citation>
    <scope>NUCLEOTIDE SEQUENCE [LARGE SCALE GENOMIC DNA]</scope>
    <source>
        <strain>ATCC 14579 / DSM 31 / CCUG 7414 / JCM 2152 / NBRC 15305 / NCIMB 9373 / NCTC 2599 / NRRL B-3711</strain>
    </source>
</reference>
<gene>
    <name evidence="1" type="primary">infC</name>
    <name type="ordered locus">BC_4575</name>
</gene>
<evidence type="ECO:0000255" key="1">
    <source>
        <dbReference type="HAMAP-Rule" id="MF_00080"/>
    </source>
</evidence>
<feature type="chain" id="PRO_0000177477" description="Translation initiation factor IF-3">
    <location>
        <begin position="1"/>
        <end position="167"/>
    </location>
</feature>
<name>IF3_BACCR</name>
<comment type="function">
    <text evidence="1">IF-3 binds to the 30S ribosomal subunit and shifts the equilibrium between 70S ribosomes and their 50S and 30S subunits in favor of the free subunits, thus enhancing the availability of 30S subunits on which protein synthesis initiation begins.</text>
</comment>
<comment type="subunit">
    <text evidence="1">Monomer.</text>
</comment>
<comment type="subcellular location">
    <subcellularLocation>
        <location evidence="1">Cytoplasm</location>
    </subcellularLocation>
</comment>
<comment type="similarity">
    <text evidence="1">Belongs to the IF-3 family.</text>
</comment>